<name>CCU43_ARATH</name>
<feature type="chain" id="PRO_0000287074" description="Cyclin-U4-3">
    <location>
        <begin position="1"/>
        <end position="219"/>
    </location>
</feature>
<evidence type="ECO:0000269" key="1">
    <source>
    </source>
</evidence>
<evidence type="ECO:0000305" key="2"/>
<sequence length="219" mass="25311">MADQIEIQRMNQDLQEPLAEIMPSVLTAMSYLLQRVSETNDNLSQKQKPSSFTGVTKPSISIRSYLERIFEYANCSYSCYIVAYIYLDRFVKKQPFLPINSFNVHRLIITSVLVSAKFMDDLSYNNEYYAKVGGISREEMNMLELDFLFGIGFELNVTVSTFNNYCCFLQREMAMLMKMKSLFLEPSSFKISSKTKLVMYPHEEDSLSTHHNKKQLAAA</sequence>
<reference key="1">
    <citation type="journal article" date="1998" name="DNA Res.">
        <title>Structural analysis of Arabidopsis thaliana chromosome 5. VI. Sequence features of the regions of 1,367,185 bp covered by 19 physically assigned P1 and TAC clones.</title>
        <authorList>
            <person name="Kotani H."/>
            <person name="Nakamura Y."/>
            <person name="Sato S."/>
            <person name="Asamizu E."/>
            <person name="Kaneko T."/>
            <person name="Miyajima N."/>
            <person name="Tabata S."/>
        </authorList>
    </citation>
    <scope>NUCLEOTIDE SEQUENCE [LARGE SCALE GENOMIC DNA]</scope>
    <source>
        <strain>cv. Columbia</strain>
    </source>
</reference>
<reference key="2">
    <citation type="journal article" date="2017" name="Plant J.">
        <title>Araport11: a complete reannotation of the Arabidopsis thaliana reference genome.</title>
        <authorList>
            <person name="Cheng C.Y."/>
            <person name="Krishnakumar V."/>
            <person name="Chan A.P."/>
            <person name="Thibaud-Nissen F."/>
            <person name="Schobel S."/>
            <person name="Town C.D."/>
        </authorList>
    </citation>
    <scope>GENOME REANNOTATION</scope>
    <source>
        <strain>cv. Columbia</strain>
    </source>
</reference>
<reference key="3">
    <citation type="submission" date="2004-01" db="EMBL/GenBank/DDBJ databases">
        <authorList>
            <person name="Cheuk R.F."/>
            <person name="Chen H."/>
            <person name="Kim C.J."/>
            <person name="Shinn P."/>
            <person name="Ecker J.R."/>
        </authorList>
    </citation>
    <scope>NUCLEOTIDE SEQUENCE [LARGE SCALE MRNA]</scope>
    <source>
        <strain>cv. Columbia</strain>
    </source>
</reference>
<reference key="4">
    <citation type="journal article" date="2004" name="Cell. Mol. Life Sci.">
        <title>Molecular characterization of Arabidopsis PHO80-like proteins, a novel class of CDKA;1-interacting cyclins.</title>
        <authorList>
            <person name="Torres Acosta J.A."/>
            <person name="de Almeida Engler J."/>
            <person name="Raes J."/>
            <person name="Magyar Z."/>
            <person name="de Groodt R."/>
            <person name="Inze D."/>
            <person name="de Veylder L."/>
        </authorList>
    </citation>
    <scope>TISSUE SPECIFICITY</scope>
    <scope>INTERACTION WITH CDKA-1</scope>
</reference>
<reference key="5">
    <citation type="journal article" date="2004" name="Plant Physiol.">
        <title>Genome-wide analysis of the cyclin family in Arabidopsis and comparative phylogenetic analysis of plant cyclin-like proteins.</title>
        <authorList>
            <person name="Wang G."/>
            <person name="Kong H."/>
            <person name="Sun Y."/>
            <person name="Zhang X."/>
            <person name="Zhang W."/>
            <person name="Altman N."/>
            <person name="dePamphilis C.W."/>
            <person name="Ma H."/>
        </authorList>
    </citation>
    <scope>GENE FAMILY</scope>
    <scope>NOMENCLATURE</scope>
</reference>
<dbReference type="EMBL" id="AB012239">
    <property type="protein sequence ID" value="BAB09009.1"/>
    <property type="molecule type" value="Genomic_DNA"/>
</dbReference>
<dbReference type="EMBL" id="CP002688">
    <property type="protein sequence ID" value="AED97501.1"/>
    <property type="molecule type" value="Genomic_DNA"/>
</dbReference>
<dbReference type="EMBL" id="BT010852">
    <property type="protein sequence ID" value="AAR24219.1"/>
    <property type="molecule type" value="mRNA"/>
</dbReference>
<dbReference type="EMBL" id="BT011324">
    <property type="protein sequence ID" value="AAR92360.1"/>
    <property type="molecule type" value="mRNA"/>
</dbReference>
<dbReference type="RefSeq" id="NP_200973.1">
    <property type="nucleotide sequence ID" value="NM_125559.3"/>
</dbReference>
<dbReference type="SMR" id="Q9FKF6"/>
<dbReference type="BioGRID" id="21531">
    <property type="interactions" value="1"/>
</dbReference>
<dbReference type="FunCoup" id="Q9FKF6">
    <property type="interactions" value="205"/>
</dbReference>
<dbReference type="IntAct" id="Q9FKF6">
    <property type="interactions" value="1"/>
</dbReference>
<dbReference type="STRING" id="3702.Q9FKF6"/>
<dbReference type="PaxDb" id="3702-AT5G61650.1"/>
<dbReference type="EnsemblPlants" id="AT5G61650.1">
    <property type="protein sequence ID" value="AT5G61650.1"/>
    <property type="gene ID" value="AT5G61650"/>
</dbReference>
<dbReference type="GeneID" id="836287"/>
<dbReference type="Gramene" id="AT5G61650.1">
    <property type="protein sequence ID" value="AT5G61650.1"/>
    <property type="gene ID" value="AT5G61650"/>
</dbReference>
<dbReference type="KEGG" id="ath:AT5G61650"/>
<dbReference type="Araport" id="AT5G61650"/>
<dbReference type="TAIR" id="AT5G61650">
    <property type="gene designation" value="CYCP4"/>
</dbReference>
<dbReference type="eggNOG" id="KOG1674">
    <property type="taxonomic scope" value="Eukaryota"/>
</dbReference>
<dbReference type="HOGENOM" id="CLU_057371_1_1_1"/>
<dbReference type="InParanoid" id="Q9FKF6"/>
<dbReference type="OMA" id="KPQITIY"/>
<dbReference type="PhylomeDB" id="Q9FKF6"/>
<dbReference type="PRO" id="PR:Q9FKF6"/>
<dbReference type="Proteomes" id="UP000006548">
    <property type="component" value="Chromosome 5"/>
</dbReference>
<dbReference type="ExpressionAtlas" id="Q9FKF6">
    <property type="expression patterns" value="baseline and differential"/>
</dbReference>
<dbReference type="GO" id="GO:0019901">
    <property type="term" value="F:protein kinase binding"/>
    <property type="evidence" value="ECO:0007669"/>
    <property type="project" value="InterPro"/>
</dbReference>
<dbReference type="GO" id="GO:0051301">
    <property type="term" value="P:cell division"/>
    <property type="evidence" value="ECO:0007669"/>
    <property type="project" value="UniProtKB-KW"/>
</dbReference>
<dbReference type="CDD" id="cd20604">
    <property type="entry name" value="CYCLIN_AtCycU-like"/>
    <property type="match status" value="1"/>
</dbReference>
<dbReference type="Gene3D" id="1.10.472.10">
    <property type="entry name" value="Cyclin-like"/>
    <property type="match status" value="1"/>
</dbReference>
<dbReference type="InterPro" id="IPR036915">
    <property type="entry name" value="Cyclin-like_sf"/>
</dbReference>
<dbReference type="InterPro" id="IPR012389">
    <property type="entry name" value="Cyclin_P/U"/>
</dbReference>
<dbReference type="InterPro" id="IPR013922">
    <property type="entry name" value="Cyclin_PHO80-like"/>
</dbReference>
<dbReference type="PANTHER" id="PTHR15615">
    <property type="match status" value="1"/>
</dbReference>
<dbReference type="PANTHER" id="PTHR15615:SF115">
    <property type="entry name" value="CYCLIN-U4-3"/>
    <property type="match status" value="1"/>
</dbReference>
<dbReference type="Pfam" id="PF08613">
    <property type="entry name" value="Cyclin"/>
    <property type="match status" value="1"/>
</dbReference>
<dbReference type="PIRSF" id="PIRSF027110">
    <property type="entry name" value="PREG"/>
    <property type="match status" value="1"/>
</dbReference>
<dbReference type="SUPFAM" id="SSF47954">
    <property type="entry name" value="Cyclin-like"/>
    <property type="match status" value="1"/>
</dbReference>
<comment type="subunit">
    <text evidence="1">Interacts with CDKA-1.</text>
</comment>
<comment type="interaction">
    <interactant intactId="EBI-1773829">
        <id>Q9FKF6</id>
    </interactant>
    <interactant intactId="EBI-371713">
        <id>P24100</id>
        <label>CDKA-1</label>
    </interactant>
    <organismsDiffer>false</organismsDiffer>
    <experiments>2</experiments>
</comment>
<comment type="tissue specificity">
    <text evidence="1">Expressed at low levels in roots, stems and flowers. Expressed in the shoot apex, leaf primordia and young leaves.</text>
</comment>
<comment type="similarity">
    <text evidence="2">Belongs to the cyclin family. Cyclin U/P subfamily.</text>
</comment>
<proteinExistence type="evidence at protein level"/>
<gene>
    <name type="primary">CYCU4-3</name>
    <name type="ordered locus">At5g61650</name>
    <name type="ORF">K11J9.17</name>
</gene>
<accession>Q9FKF6</accession>
<keyword id="KW-0131">Cell cycle</keyword>
<keyword id="KW-0132">Cell division</keyword>
<keyword id="KW-0195">Cyclin</keyword>
<keyword id="KW-1185">Reference proteome</keyword>
<organism>
    <name type="scientific">Arabidopsis thaliana</name>
    <name type="common">Mouse-ear cress</name>
    <dbReference type="NCBI Taxonomy" id="3702"/>
    <lineage>
        <taxon>Eukaryota</taxon>
        <taxon>Viridiplantae</taxon>
        <taxon>Streptophyta</taxon>
        <taxon>Embryophyta</taxon>
        <taxon>Tracheophyta</taxon>
        <taxon>Spermatophyta</taxon>
        <taxon>Magnoliopsida</taxon>
        <taxon>eudicotyledons</taxon>
        <taxon>Gunneridae</taxon>
        <taxon>Pentapetalae</taxon>
        <taxon>rosids</taxon>
        <taxon>malvids</taxon>
        <taxon>Brassicales</taxon>
        <taxon>Brassicaceae</taxon>
        <taxon>Camelineae</taxon>
        <taxon>Arabidopsis</taxon>
    </lineage>
</organism>
<protein>
    <recommendedName>
        <fullName>Cyclin-U4-3</fullName>
        <shortName>CycU4;3</shortName>
    </recommendedName>
    <alternativeName>
        <fullName>Cyclin-P4.2</fullName>
        <shortName>CycP4;2</shortName>
    </alternativeName>
</protein>